<sequence>MAISRLLVEKFRNLTAVDLDFDPCFNFLIGNNGSGKTSLLEAIFYLGHGRSFKSAVTNRIISYDEPHFTLFGQIQESQHQWSVGLQKLRQGNTLVKINGEDGNKISDLAHLLPMQLITPEGLTLLNGGPSYRRAFLDWGLFHHQTSFYSAWSNLNRLLKQRNAALAQNQPYSAIKIWDVELAKLAHQVSQWRAEYAEALRPEIEQTCQLFLPELEINVSFHQGWEKNADYYEILQQNFERDRALNYTFSGPQKADFRFKAQGLPVEDVLSRGQLKLLMCVLRLAQGEHLMKEKQRHCIFLIDDFASELDQYKRALLAERLQQSGSQVFVTAITQRQLKEMQVENKKMFSVHNGIINALN</sequence>
<proteinExistence type="inferred from homology"/>
<organism>
    <name type="scientific">Haemophilus influenzae (strain 86-028NP)</name>
    <dbReference type="NCBI Taxonomy" id="281310"/>
    <lineage>
        <taxon>Bacteria</taxon>
        <taxon>Pseudomonadati</taxon>
        <taxon>Pseudomonadota</taxon>
        <taxon>Gammaproteobacteria</taxon>
        <taxon>Pasteurellales</taxon>
        <taxon>Pasteurellaceae</taxon>
        <taxon>Haemophilus</taxon>
    </lineage>
</organism>
<keyword id="KW-0067">ATP-binding</keyword>
<keyword id="KW-0963">Cytoplasm</keyword>
<keyword id="KW-0227">DNA damage</keyword>
<keyword id="KW-0234">DNA repair</keyword>
<keyword id="KW-0235">DNA replication</keyword>
<keyword id="KW-0238">DNA-binding</keyword>
<keyword id="KW-0547">Nucleotide-binding</keyword>
<keyword id="KW-0742">SOS response</keyword>
<comment type="function">
    <text evidence="1">The RecF protein is involved in DNA metabolism; it is required for DNA replication and normal SOS inducibility. RecF binds preferentially to single-stranded, linear DNA. It also seems to bind ATP.</text>
</comment>
<comment type="subcellular location">
    <subcellularLocation>
        <location evidence="1">Cytoplasm</location>
    </subcellularLocation>
</comment>
<comment type="similarity">
    <text evidence="1">Belongs to the RecF family.</text>
</comment>
<evidence type="ECO:0000255" key="1">
    <source>
        <dbReference type="HAMAP-Rule" id="MF_00365"/>
    </source>
</evidence>
<name>RECF_HAEI8</name>
<gene>
    <name evidence="1" type="primary">recF</name>
    <name type="ordered locus">NTHI1165</name>
</gene>
<accession>Q4QLR9</accession>
<reference key="1">
    <citation type="journal article" date="2005" name="J. Bacteriol.">
        <title>Genomic sequence of an otitis media isolate of nontypeable Haemophilus influenzae: comparative study with H. influenzae serotype d, strain KW20.</title>
        <authorList>
            <person name="Harrison A."/>
            <person name="Dyer D.W."/>
            <person name="Gillaspy A."/>
            <person name="Ray W.C."/>
            <person name="Mungur R."/>
            <person name="Carson M.B."/>
            <person name="Zhong H."/>
            <person name="Gipson J."/>
            <person name="Gipson M."/>
            <person name="Johnson L.S."/>
            <person name="Lewis L."/>
            <person name="Bakaletz L.O."/>
            <person name="Munson R.S. Jr."/>
        </authorList>
    </citation>
    <scope>NUCLEOTIDE SEQUENCE [LARGE SCALE GENOMIC DNA]</scope>
    <source>
        <strain>86-028NP</strain>
    </source>
</reference>
<protein>
    <recommendedName>
        <fullName evidence="1">DNA replication and repair protein RecF</fullName>
    </recommendedName>
</protein>
<feature type="chain" id="PRO_0000236121" description="DNA replication and repair protein RecF">
    <location>
        <begin position="1"/>
        <end position="359"/>
    </location>
</feature>
<feature type="binding site" evidence="1">
    <location>
        <begin position="30"/>
        <end position="37"/>
    </location>
    <ligand>
        <name>ATP</name>
        <dbReference type="ChEBI" id="CHEBI:30616"/>
    </ligand>
</feature>
<dbReference type="EMBL" id="CP000057">
    <property type="protein sequence ID" value="AAX88028.1"/>
    <property type="molecule type" value="Genomic_DNA"/>
</dbReference>
<dbReference type="RefSeq" id="WP_005655969.1">
    <property type="nucleotide sequence ID" value="NC_007146.2"/>
</dbReference>
<dbReference type="SMR" id="Q4QLR9"/>
<dbReference type="KEGG" id="hit:NTHI1165"/>
<dbReference type="HOGENOM" id="CLU_040267_0_0_6"/>
<dbReference type="Proteomes" id="UP000002525">
    <property type="component" value="Chromosome"/>
</dbReference>
<dbReference type="GO" id="GO:0005737">
    <property type="term" value="C:cytoplasm"/>
    <property type="evidence" value="ECO:0007669"/>
    <property type="project" value="UniProtKB-SubCell"/>
</dbReference>
<dbReference type="GO" id="GO:0005524">
    <property type="term" value="F:ATP binding"/>
    <property type="evidence" value="ECO:0007669"/>
    <property type="project" value="UniProtKB-UniRule"/>
</dbReference>
<dbReference type="GO" id="GO:0003697">
    <property type="term" value="F:single-stranded DNA binding"/>
    <property type="evidence" value="ECO:0007669"/>
    <property type="project" value="UniProtKB-UniRule"/>
</dbReference>
<dbReference type="GO" id="GO:0006260">
    <property type="term" value="P:DNA replication"/>
    <property type="evidence" value="ECO:0007669"/>
    <property type="project" value="UniProtKB-UniRule"/>
</dbReference>
<dbReference type="GO" id="GO:0000731">
    <property type="term" value="P:DNA synthesis involved in DNA repair"/>
    <property type="evidence" value="ECO:0007669"/>
    <property type="project" value="TreeGrafter"/>
</dbReference>
<dbReference type="GO" id="GO:0006302">
    <property type="term" value="P:double-strand break repair"/>
    <property type="evidence" value="ECO:0007669"/>
    <property type="project" value="TreeGrafter"/>
</dbReference>
<dbReference type="GO" id="GO:0009432">
    <property type="term" value="P:SOS response"/>
    <property type="evidence" value="ECO:0007669"/>
    <property type="project" value="UniProtKB-UniRule"/>
</dbReference>
<dbReference type="FunFam" id="1.20.1050.90:FF:000001">
    <property type="entry name" value="DNA replication and repair protein RecF"/>
    <property type="match status" value="1"/>
</dbReference>
<dbReference type="Gene3D" id="3.40.50.300">
    <property type="entry name" value="P-loop containing nucleotide triphosphate hydrolases"/>
    <property type="match status" value="1"/>
</dbReference>
<dbReference type="Gene3D" id="1.20.1050.90">
    <property type="entry name" value="RecF/RecN/SMC, N-terminal domain"/>
    <property type="match status" value="1"/>
</dbReference>
<dbReference type="HAMAP" id="MF_00365">
    <property type="entry name" value="RecF"/>
    <property type="match status" value="1"/>
</dbReference>
<dbReference type="InterPro" id="IPR001238">
    <property type="entry name" value="DNA-binding_RecF"/>
</dbReference>
<dbReference type="InterPro" id="IPR018078">
    <property type="entry name" value="DNA-binding_RecF_CS"/>
</dbReference>
<dbReference type="InterPro" id="IPR027417">
    <property type="entry name" value="P-loop_NTPase"/>
</dbReference>
<dbReference type="InterPro" id="IPR003395">
    <property type="entry name" value="RecF/RecN/SMC_N"/>
</dbReference>
<dbReference type="InterPro" id="IPR042174">
    <property type="entry name" value="RecF_2"/>
</dbReference>
<dbReference type="NCBIfam" id="TIGR00611">
    <property type="entry name" value="recf"/>
    <property type="match status" value="1"/>
</dbReference>
<dbReference type="PANTHER" id="PTHR32182">
    <property type="entry name" value="DNA REPLICATION AND REPAIR PROTEIN RECF"/>
    <property type="match status" value="1"/>
</dbReference>
<dbReference type="PANTHER" id="PTHR32182:SF0">
    <property type="entry name" value="DNA REPLICATION AND REPAIR PROTEIN RECF"/>
    <property type="match status" value="1"/>
</dbReference>
<dbReference type="Pfam" id="PF02463">
    <property type="entry name" value="SMC_N"/>
    <property type="match status" value="1"/>
</dbReference>
<dbReference type="SUPFAM" id="SSF52540">
    <property type="entry name" value="P-loop containing nucleoside triphosphate hydrolases"/>
    <property type="match status" value="1"/>
</dbReference>
<dbReference type="PROSITE" id="PS00617">
    <property type="entry name" value="RECF_1"/>
    <property type="match status" value="1"/>
</dbReference>
<dbReference type="PROSITE" id="PS00618">
    <property type="entry name" value="RECF_2"/>
    <property type="match status" value="1"/>
</dbReference>